<organism>
    <name type="scientific">Escherichia coli O157:H7</name>
    <dbReference type="NCBI Taxonomy" id="83334"/>
    <lineage>
        <taxon>Bacteria</taxon>
        <taxon>Pseudomonadati</taxon>
        <taxon>Pseudomonadota</taxon>
        <taxon>Gammaproteobacteria</taxon>
        <taxon>Enterobacterales</taxon>
        <taxon>Enterobacteriaceae</taxon>
        <taxon>Escherichia</taxon>
    </lineage>
</organism>
<name>UGPB_ECO57</name>
<accession>P0AG81</accession>
<accession>P10904</accession>
<protein>
    <recommendedName>
        <fullName evidence="2">sn-glycerol-3-phosphate-binding periplasmic protein UgpB</fullName>
    </recommendedName>
</protein>
<comment type="function">
    <text evidence="2">Part of the ABC transporter complex UgpBAEC involved in sn-glycerol-3-phosphate (G3P) import. Binds G3P.</text>
</comment>
<comment type="subunit">
    <text evidence="2">The complex is composed of two ATP-binding proteins (UgpC), two transmembrane proteins (UgpA and UgpE) and a solute-binding protein (UgpB).</text>
</comment>
<comment type="subcellular location">
    <subcellularLocation>
        <location evidence="2">Periplasm</location>
    </subcellularLocation>
</comment>
<comment type="similarity">
    <text evidence="3">Belongs to the bacterial solute-binding protein 1 family.</text>
</comment>
<dbReference type="EMBL" id="AE005174">
    <property type="protein sequence ID" value="AAG58559.1"/>
    <property type="molecule type" value="Genomic_DNA"/>
</dbReference>
<dbReference type="EMBL" id="BA000007">
    <property type="protein sequence ID" value="BAB37722.1"/>
    <property type="molecule type" value="Genomic_DNA"/>
</dbReference>
<dbReference type="PIR" id="C86012">
    <property type="entry name" value="C86012"/>
</dbReference>
<dbReference type="PIR" id="C91166">
    <property type="entry name" value="C91166"/>
</dbReference>
<dbReference type="RefSeq" id="NP_312326.1">
    <property type="nucleotide sequence ID" value="NC_002695.1"/>
</dbReference>
<dbReference type="RefSeq" id="WP_000803190.1">
    <property type="nucleotide sequence ID" value="NZ_VOAI01000004.1"/>
</dbReference>
<dbReference type="SMR" id="P0AG81"/>
<dbReference type="STRING" id="155864.Z4822"/>
<dbReference type="DNASU" id="961433"/>
<dbReference type="GeneID" id="75059967"/>
<dbReference type="GeneID" id="915847"/>
<dbReference type="KEGG" id="ece:Z4822"/>
<dbReference type="KEGG" id="ecs:ECs_4299"/>
<dbReference type="PATRIC" id="fig|386585.9.peg.4490"/>
<dbReference type="eggNOG" id="COG1653">
    <property type="taxonomic scope" value="Bacteria"/>
</dbReference>
<dbReference type="HOGENOM" id="CLU_031285_3_0_6"/>
<dbReference type="OMA" id="EIQWWHS"/>
<dbReference type="Proteomes" id="UP000000558">
    <property type="component" value="Chromosome"/>
</dbReference>
<dbReference type="Proteomes" id="UP000002519">
    <property type="component" value="Chromosome"/>
</dbReference>
<dbReference type="GO" id="GO:0030288">
    <property type="term" value="C:outer membrane-bounded periplasmic space"/>
    <property type="evidence" value="ECO:0007669"/>
    <property type="project" value="UniProtKB-ARBA"/>
</dbReference>
<dbReference type="GO" id="GO:0055085">
    <property type="term" value="P:transmembrane transport"/>
    <property type="evidence" value="ECO:0007669"/>
    <property type="project" value="InterPro"/>
</dbReference>
<dbReference type="CDD" id="cd14748">
    <property type="entry name" value="PBP2_UgpB"/>
    <property type="match status" value="1"/>
</dbReference>
<dbReference type="Gene3D" id="3.40.190.10">
    <property type="entry name" value="Periplasmic binding protein-like II"/>
    <property type="match status" value="2"/>
</dbReference>
<dbReference type="InterPro" id="IPR050490">
    <property type="entry name" value="Bact_solute-bd_prot1"/>
</dbReference>
<dbReference type="InterPro" id="IPR006059">
    <property type="entry name" value="SBP"/>
</dbReference>
<dbReference type="InterPro" id="IPR006061">
    <property type="entry name" value="SBP_1_CS"/>
</dbReference>
<dbReference type="NCBIfam" id="NF008211">
    <property type="entry name" value="PRK10974.1"/>
    <property type="match status" value="1"/>
</dbReference>
<dbReference type="PANTHER" id="PTHR43649">
    <property type="entry name" value="ARABINOSE-BINDING PROTEIN-RELATED"/>
    <property type="match status" value="1"/>
</dbReference>
<dbReference type="PANTHER" id="PTHR43649:SF31">
    <property type="entry name" value="SN-GLYCEROL-3-PHOSPHATE-BINDING PERIPLASMIC PROTEIN UGPB"/>
    <property type="match status" value="1"/>
</dbReference>
<dbReference type="Pfam" id="PF13416">
    <property type="entry name" value="SBP_bac_8"/>
    <property type="match status" value="1"/>
</dbReference>
<dbReference type="SUPFAM" id="SSF53850">
    <property type="entry name" value="Periplasmic binding protein-like II"/>
    <property type="match status" value="1"/>
</dbReference>
<dbReference type="PROSITE" id="PS01037">
    <property type="entry name" value="SBP_BACTERIAL_1"/>
    <property type="match status" value="1"/>
</dbReference>
<feature type="signal peptide" evidence="1">
    <location>
        <begin position="1"/>
        <end position="23"/>
    </location>
</feature>
<feature type="chain" id="PRO_0000045262" description="sn-glycerol-3-phosphate-binding periplasmic protein UgpB">
    <location>
        <begin position="24"/>
        <end position="438"/>
    </location>
</feature>
<feature type="binding site" evidence="2">
    <location>
        <position position="65"/>
    </location>
    <ligand>
        <name>sn-glycerol 3-phosphate</name>
        <dbReference type="ChEBI" id="CHEBI:57597"/>
    </ligand>
</feature>
<feature type="binding site" evidence="2">
    <location>
        <position position="89"/>
    </location>
    <ligand>
        <name>sn-glycerol 3-phosphate</name>
        <dbReference type="ChEBI" id="CHEBI:57597"/>
    </ligand>
</feature>
<feature type="binding site" evidence="2">
    <location>
        <position position="144"/>
    </location>
    <ligand>
        <name>sn-glycerol 3-phosphate</name>
        <dbReference type="ChEBI" id="CHEBI:57597"/>
    </ligand>
</feature>
<feature type="binding site" evidence="2">
    <location>
        <position position="270"/>
    </location>
    <ligand>
        <name>sn-glycerol 3-phosphate</name>
        <dbReference type="ChEBI" id="CHEBI:57597"/>
    </ligand>
</feature>
<feature type="binding site" evidence="2">
    <location>
        <position position="307"/>
    </location>
    <ligand>
        <name>sn-glycerol 3-phosphate</name>
        <dbReference type="ChEBI" id="CHEBI:57597"/>
    </ligand>
</feature>
<feature type="binding site" evidence="2">
    <location>
        <position position="346"/>
    </location>
    <ligand>
        <name>sn-glycerol 3-phosphate</name>
        <dbReference type="ChEBI" id="CHEBI:57597"/>
    </ligand>
</feature>
<feature type="binding site" evidence="2">
    <location>
        <position position="397"/>
    </location>
    <ligand>
        <name>sn-glycerol 3-phosphate</name>
        <dbReference type="ChEBI" id="CHEBI:57597"/>
    </ligand>
</feature>
<evidence type="ECO:0000250" key="1"/>
<evidence type="ECO:0000250" key="2">
    <source>
        <dbReference type="UniProtKB" id="P0AG80"/>
    </source>
</evidence>
<evidence type="ECO:0000305" key="3"/>
<gene>
    <name type="primary">ugpB</name>
    <name type="ordered locus">Z4822</name>
    <name type="ordered locus">ECs4299</name>
</gene>
<proteinExistence type="inferred from homology"/>
<sequence>MKPLHYTASALALGLALMGNAQAVTTIPFWHSMEGELGKEVDSLAQRFNAENPDYKIVPTYKGNYEQNLSAGIAAFRTGNAPAILQVYEVGTATMMASKAIKPVYDVFKEAGIQFDESQFVPTVSGYYSDSKTGHLLSQPFNSSTPVLYYNKDAFKKAGLDPEQPPKTWQDLADYAAKLKASGMKCGYASGWQGWIQLENFSAWNGLPFASKNNGFDGTDAVLEFNKPEQVKHIAMLEEMNKKGDFSYVGRKDESTEKFYNGDCAMTTASSGSLANIREYAKFNYGVGMMPYDADAKDAPQNAIIGGASLWVMQGKDKETYTGVAKFLDFLAKPENAAEWHQKTGYLPITKAAYDLTREQGFYEKNPGADTATRQMLNKPPLPFTKGLRLGNMPQIRVIVDEELESVWTGKKTPQQALDTAVERGNQLLRRFEKSTKS</sequence>
<reference key="1">
    <citation type="journal article" date="2001" name="Nature">
        <title>Genome sequence of enterohaemorrhagic Escherichia coli O157:H7.</title>
        <authorList>
            <person name="Perna N.T."/>
            <person name="Plunkett G. III"/>
            <person name="Burland V."/>
            <person name="Mau B."/>
            <person name="Glasner J.D."/>
            <person name="Rose D.J."/>
            <person name="Mayhew G.F."/>
            <person name="Evans P.S."/>
            <person name="Gregor J."/>
            <person name="Kirkpatrick H.A."/>
            <person name="Posfai G."/>
            <person name="Hackett J."/>
            <person name="Klink S."/>
            <person name="Boutin A."/>
            <person name="Shao Y."/>
            <person name="Miller L."/>
            <person name="Grotbeck E.J."/>
            <person name="Davis N.W."/>
            <person name="Lim A."/>
            <person name="Dimalanta E.T."/>
            <person name="Potamousis K."/>
            <person name="Apodaca J."/>
            <person name="Anantharaman T.S."/>
            <person name="Lin J."/>
            <person name="Yen G."/>
            <person name="Schwartz D.C."/>
            <person name="Welch R.A."/>
            <person name="Blattner F.R."/>
        </authorList>
    </citation>
    <scope>NUCLEOTIDE SEQUENCE [LARGE SCALE GENOMIC DNA]</scope>
    <source>
        <strain>O157:H7 / EDL933 / ATCC 700927 / EHEC</strain>
    </source>
</reference>
<reference key="2">
    <citation type="journal article" date="2001" name="DNA Res.">
        <title>Complete genome sequence of enterohemorrhagic Escherichia coli O157:H7 and genomic comparison with a laboratory strain K-12.</title>
        <authorList>
            <person name="Hayashi T."/>
            <person name="Makino K."/>
            <person name="Ohnishi M."/>
            <person name="Kurokawa K."/>
            <person name="Ishii K."/>
            <person name="Yokoyama K."/>
            <person name="Han C.-G."/>
            <person name="Ohtsubo E."/>
            <person name="Nakayama K."/>
            <person name="Murata T."/>
            <person name="Tanaka M."/>
            <person name="Tobe T."/>
            <person name="Iida T."/>
            <person name="Takami H."/>
            <person name="Honda T."/>
            <person name="Sasakawa C."/>
            <person name="Ogasawara N."/>
            <person name="Yasunaga T."/>
            <person name="Kuhara S."/>
            <person name="Shiba T."/>
            <person name="Hattori M."/>
            <person name="Shinagawa H."/>
        </authorList>
    </citation>
    <scope>NUCLEOTIDE SEQUENCE [LARGE SCALE GENOMIC DNA]</scope>
    <source>
        <strain>O157:H7 / Sakai / RIMD 0509952 / EHEC</strain>
    </source>
</reference>
<keyword id="KW-0574">Periplasm</keyword>
<keyword id="KW-1185">Reference proteome</keyword>
<keyword id="KW-0732">Signal</keyword>
<keyword id="KW-0813">Transport</keyword>